<protein>
    <recommendedName>
        <fullName evidence="1">Small ribosomal subunit protein uS8</fullName>
    </recommendedName>
    <alternativeName>
        <fullName evidence="2">30S ribosomal protein S8</fullName>
    </alternativeName>
</protein>
<name>RS8_EHRRW</name>
<feature type="chain" id="PRO_0000290833" description="Small ribosomal subunit protein uS8">
    <location>
        <begin position="1"/>
        <end position="132"/>
    </location>
</feature>
<reference key="1">
    <citation type="journal article" date="2005" name="Proc. Natl. Acad. Sci. U.S.A.">
        <title>The genome of the heartwater agent Ehrlichia ruminantium contains multiple tandem repeats of actively variable copy number.</title>
        <authorList>
            <person name="Collins N.E."/>
            <person name="Liebenberg J."/>
            <person name="de Villiers E.P."/>
            <person name="Brayton K.A."/>
            <person name="Louw E."/>
            <person name="Pretorius A."/>
            <person name="Faber F.E."/>
            <person name="van Heerden H."/>
            <person name="Josemans A."/>
            <person name="van Kleef M."/>
            <person name="Steyn H.C."/>
            <person name="van Strijp M.F."/>
            <person name="Zweygarth E."/>
            <person name="Jongejan F."/>
            <person name="Maillard J.C."/>
            <person name="Berthier D."/>
            <person name="Botha M."/>
            <person name="Joubert F."/>
            <person name="Corton C.H."/>
            <person name="Thomson N.R."/>
            <person name="Allsopp M.T."/>
            <person name="Allsopp B.A."/>
        </authorList>
    </citation>
    <scope>NUCLEOTIDE SEQUENCE [LARGE SCALE GENOMIC DNA]</scope>
    <source>
        <strain>Welgevonden</strain>
    </source>
</reference>
<reference key="2">
    <citation type="journal article" date="2006" name="J. Bacteriol.">
        <title>Comparative genomic analysis of three strains of Ehrlichia ruminantium reveals an active process of genome size plasticity.</title>
        <authorList>
            <person name="Frutos R."/>
            <person name="Viari A."/>
            <person name="Ferraz C."/>
            <person name="Morgat A."/>
            <person name="Eychenie S."/>
            <person name="Kandassamy Y."/>
            <person name="Chantal I."/>
            <person name="Bensaid A."/>
            <person name="Coissac E."/>
            <person name="Vachiery N."/>
            <person name="Demaille J."/>
            <person name="Martinez D."/>
        </authorList>
    </citation>
    <scope>NUCLEOTIDE SEQUENCE [LARGE SCALE GENOMIC DNA]</scope>
    <source>
        <strain>Welgevonden</strain>
    </source>
</reference>
<keyword id="KW-0687">Ribonucleoprotein</keyword>
<keyword id="KW-0689">Ribosomal protein</keyword>
<keyword id="KW-0694">RNA-binding</keyword>
<keyword id="KW-0699">rRNA-binding</keyword>
<organism>
    <name type="scientific">Ehrlichia ruminantium (strain Welgevonden)</name>
    <dbReference type="NCBI Taxonomy" id="254945"/>
    <lineage>
        <taxon>Bacteria</taxon>
        <taxon>Pseudomonadati</taxon>
        <taxon>Pseudomonadota</taxon>
        <taxon>Alphaproteobacteria</taxon>
        <taxon>Rickettsiales</taxon>
        <taxon>Anaplasmataceae</taxon>
        <taxon>Ehrlichia</taxon>
    </lineage>
</organism>
<evidence type="ECO:0000255" key="1">
    <source>
        <dbReference type="HAMAP-Rule" id="MF_01302"/>
    </source>
</evidence>
<evidence type="ECO:0000305" key="2"/>
<gene>
    <name evidence="1" type="primary">rpsH</name>
    <name type="ordered locus">Erum5940</name>
    <name type="ordered locus">ERWE_CDS_06240</name>
</gene>
<proteinExistence type="inferred from homology"/>
<accession>Q5HAT6</accession>
<accession>Q5FD72</accession>
<comment type="function">
    <text evidence="1">One of the primary rRNA binding proteins, it binds directly to 16S rRNA central domain where it helps coordinate assembly of the platform of the 30S subunit.</text>
</comment>
<comment type="subunit">
    <text evidence="1">Part of the 30S ribosomal subunit. Contacts proteins S5 and S12.</text>
</comment>
<comment type="similarity">
    <text evidence="1">Belongs to the universal ribosomal protein uS8 family.</text>
</comment>
<comment type="sequence caution" evidence="2">
    <conflict type="erroneous initiation">
        <sequence resource="EMBL-CDS" id="CAI27118"/>
    </conflict>
</comment>
<dbReference type="EMBL" id="CR767821">
    <property type="protein sequence ID" value="CAH58325.1"/>
    <property type="molecule type" value="Genomic_DNA"/>
</dbReference>
<dbReference type="EMBL" id="CR925678">
    <property type="protein sequence ID" value="CAI27118.1"/>
    <property type="status" value="ALT_INIT"/>
    <property type="molecule type" value="Genomic_DNA"/>
</dbReference>
<dbReference type="RefSeq" id="WP_011155275.1">
    <property type="nucleotide sequence ID" value="NC_005295.2"/>
</dbReference>
<dbReference type="SMR" id="Q5HAT6"/>
<dbReference type="GeneID" id="33058203"/>
<dbReference type="KEGG" id="eru:Erum5940"/>
<dbReference type="KEGG" id="erw:ERWE_CDS_06240"/>
<dbReference type="eggNOG" id="COG0096">
    <property type="taxonomic scope" value="Bacteria"/>
</dbReference>
<dbReference type="HOGENOM" id="CLU_098428_0_0_5"/>
<dbReference type="Proteomes" id="UP000001021">
    <property type="component" value="Chromosome"/>
</dbReference>
<dbReference type="GO" id="GO:1990904">
    <property type="term" value="C:ribonucleoprotein complex"/>
    <property type="evidence" value="ECO:0007669"/>
    <property type="project" value="UniProtKB-KW"/>
</dbReference>
<dbReference type="GO" id="GO:0005840">
    <property type="term" value="C:ribosome"/>
    <property type="evidence" value="ECO:0007669"/>
    <property type="project" value="UniProtKB-KW"/>
</dbReference>
<dbReference type="GO" id="GO:0019843">
    <property type="term" value="F:rRNA binding"/>
    <property type="evidence" value="ECO:0007669"/>
    <property type="project" value="UniProtKB-UniRule"/>
</dbReference>
<dbReference type="GO" id="GO:0003735">
    <property type="term" value="F:structural constituent of ribosome"/>
    <property type="evidence" value="ECO:0007669"/>
    <property type="project" value="InterPro"/>
</dbReference>
<dbReference type="GO" id="GO:0006412">
    <property type="term" value="P:translation"/>
    <property type="evidence" value="ECO:0007669"/>
    <property type="project" value="UniProtKB-UniRule"/>
</dbReference>
<dbReference type="FunFam" id="3.30.1490.10:FF:000001">
    <property type="entry name" value="30S ribosomal protein S8"/>
    <property type="match status" value="1"/>
</dbReference>
<dbReference type="Gene3D" id="3.30.1370.30">
    <property type="match status" value="1"/>
</dbReference>
<dbReference type="Gene3D" id="3.30.1490.10">
    <property type="match status" value="1"/>
</dbReference>
<dbReference type="HAMAP" id="MF_01302_B">
    <property type="entry name" value="Ribosomal_uS8_B"/>
    <property type="match status" value="1"/>
</dbReference>
<dbReference type="InterPro" id="IPR000630">
    <property type="entry name" value="Ribosomal_uS8"/>
</dbReference>
<dbReference type="InterPro" id="IPR047863">
    <property type="entry name" value="Ribosomal_uS8_CS"/>
</dbReference>
<dbReference type="InterPro" id="IPR035987">
    <property type="entry name" value="Ribosomal_uS8_sf"/>
</dbReference>
<dbReference type="NCBIfam" id="NF001109">
    <property type="entry name" value="PRK00136.1"/>
    <property type="match status" value="1"/>
</dbReference>
<dbReference type="PANTHER" id="PTHR11758">
    <property type="entry name" value="40S RIBOSOMAL PROTEIN S15A"/>
    <property type="match status" value="1"/>
</dbReference>
<dbReference type="Pfam" id="PF00410">
    <property type="entry name" value="Ribosomal_S8"/>
    <property type="match status" value="1"/>
</dbReference>
<dbReference type="SUPFAM" id="SSF56047">
    <property type="entry name" value="Ribosomal protein S8"/>
    <property type="match status" value="1"/>
</dbReference>
<dbReference type="PROSITE" id="PS00053">
    <property type="entry name" value="RIBOSOMAL_S8"/>
    <property type="match status" value="1"/>
</dbReference>
<sequence length="132" mass="14668">MSLSDPIANFLTSIRNGQLSMNKVVTVSYSYVIHAILQILLSEGYIDGFTEKLRSTNIKFFEVKLKYYNGVPVINRICRVSKPGKRCYCSAKGMPKFYNGLGLYIISTSKGIMSDYNARKSGVGGEILCGVF</sequence>